<sequence>MTLSPTTADKFTFGLWTVGWTGADPFGVATRAALDPVEAVHKLSELGAYGITFHDNDLVPFDAPASERELILKNFRAALADTGLKVPMVTTNLFSHPVFKDGGFTSNDRSVRRFALSKVLRNIDLAAELGAETFVMWGGREGSEYDGSKDLAAALDRMKEGVDTAAGYIKDKGYNLRIALEPKPNEPRGDIFLPTVGHGLAFIAQLEHGDIVGLNPETGHEQMAGLNFTHGIAQALWAGKLFHIDLNGQRGIKYDQDLVFGHGDLTSAFFTVDLLENGFPGGGPKYDGPRHFDYKPSRTDGYDGVWESAKANMAMYLLLKERALAFRADPEVQEALAASGVFELGEPTLNAGETTADLLADAASFEDFDADKAAERSFAFVRLNQLAIEHLLNAR</sequence>
<reference key="1">
    <citation type="submission" date="2009-01" db="EMBL/GenBank/DDBJ databases">
        <title>Complete sequence of chromosome of Arthrobacter chlorophenolicus A6.</title>
        <authorList>
            <consortium name="US DOE Joint Genome Institute"/>
            <person name="Lucas S."/>
            <person name="Copeland A."/>
            <person name="Lapidus A."/>
            <person name="Glavina del Rio T."/>
            <person name="Tice H."/>
            <person name="Bruce D."/>
            <person name="Goodwin L."/>
            <person name="Pitluck S."/>
            <person name="Goltsman E."/>
            <person name="Clum A."/>
            <person name="Larimer F."/>
            <person name="Land M."/>
            <person name="Hauser L."/>
            <person name="Kyrpides N."/>
            <person name="Mikhailova N."/>
            <person name="Jansson J."/>
            <person name="Richardson P."/>
        </authorList>
    </citation>
    <scope>NUCLEOTIDE SEQUENCE [LARGE SCALE GENOMIC DNA]</scope>
    <source>
        <strain>ATCC 700700 / DSM 12829 / CIP 107037 / JCM 12360 / KCTC 9906 / NCIMB 13794 / A6</strain>
    </source>
</reference>
<proteinExistence type="inferred from homology"/>
<keyword id="KW-0119">Carbohydrate metabolism</keyword>
<keyword id="KW-0963">Cytoplasm</keyword>
<keyword id="KW-0413">Isomerase</keyword>
<keyword id="KW-0460">Magnesium</keyword>
<keyword id="KW-0479">Metal-binding</keyword>
<keyword id="KW-0859">Xylose metabolism</keyword>
<name>XYLA_PSECP</name>
<comment type="catalytic activity">
    <reaction evidence="1">
        <text>alpha-D-xylose = alpha-D-xylulofuranose</text>
        <dbReference type="Rhea" id="RHEA:22816"/>
        <dbReference type="ChEBI" id="CHEBI:28518"/>
        <dbReference type="ChEBI" id="CHEBI:188998"/>
        <dbReference type="EC" id="5.3.1.5"/>
    </reaction>
</comment>
<comment type="cofactor">
    <cofactor evidence="1">
        <name>Mg(2+)</name>
        <dbReference type="ChEBI" id="CHEBI:18420"/>
    </cofactor>
    <text evidence="1">Binds 2 magnesium ions per subunit.</text>
</comment>
<comment type="subunit">
    <text evidence="1">Homotetramer.</text>
</comment>
<comment type="subcellular location">
    <subcellularLocation>
        <location evidence="1">Cytoplasm</location>
    </subcellularLocation>
</comment>
<comment type="similarity">
    <text evidence="1">Belongs to the xylose isomerase family.</text>
</comment>
<protein>
    <recommendedName>
        <fullName evidence="1">Xylose isomerase</fullName>
        <ecNumber evidence="1">5.3.1.5</ecNumber>
    </recommendedName>
</protein>
<feature type="chain" id="PRO_1000200277" description="Xylose isomerase">
    <location>
        <begin position="1"/>
        <end position="395"/>
    </location>
</feature>
<feature type="active site" evidence="1">
    <location>
        <position position="54"/>
    </location>
</feature>
<feature type="active site" evidence="1">
    <location>
        <position position="57"/>
    </location>
</feature>
<feature type="binding site" evidence="1">
    <location>
        <position position="181"/>
    </location>
    <ligand>
        <name>Mg(2+)</name>
        <dbReference type="ChEBI" id="CHEBI:18420"/>
        <label>1</label>
    </ligand>
</feature>
<feature type="binding site" evidence="1">
    <location>
        <position position="217"/>
    </location>
    <ligand>
        <name>Mg(2+)</name>
        <dbReference type="ChEBI" id="CHEBI:18420"/>
        <label>1</label>
    </ligand>
</feature>
<feature type="binding site" evidence="1">
    <location>
        <position position="217"/>
    </location>
    <ligand>
        <name>Mg(2+)</name>
        <dbReference type="ChEBI" id="CHEBI:18420"/>
        <label>2</label>
    </ligand>
</feature>
<feature type="binding site" evidence="1">
    <location>
        <position position="220"/>
    </location>
    <ligand>
        <name>Mg(2+)</name>
        <dbReference type="ChEBI" id="CHEBI:18420"/>
        <label>2</label>
    </ligand>
</feature>
<feature type="binding site" evidence="1">
    <location>
        <position position="245"/>
    </location>
    <ligand>
        <name>Mg(2+)</name>
        <dbReference type="ChEBI" id="CHEBI:18420"/>
        <label>1</label>
    </ligand>
</feature>
<feature type="binding site" evidence="1">
    <location>
        <position position="255"/>
    </location>
    <ligand>
        <name>Mg(2+)</name>
        <dbReference type="ChEBI" id="CHEBI:18420"/>
        <label>2</label>
    </ligand>
</feature>
<feature type="binding site" evidence="1">
    <location>
        <position position="257"/>
    </location>
    <ligand>
        <name>Mg(2+)</name>
        <dbReference type="ChEBI" id="CHEBI:18420"/>
        <label>2</label>
    </ligand>
</feature>
<feature type="binding site" evidence="1">
    <location>
        <position position="293"/>
    </location>
    <ligand>
        <name>Mg(2+)</name>
        <dbReference type="ChEBI" id="CHEBI:18420"/>
        <label>1</label>
    </ligand>
</feature>
<gene>
    <name evidence="1" type="primary">xylA</name>
    <name type="ordered locus">Achl_2175</name>
</gene>
<dbReference type="EC" id="5.3.1.5" evidence="1"/>
<dbReference type="EMBL" id="CP001341">
    <property type="protein sequence ID" value="ACL40143.1"/>
    <property type="molecule type" value="Genomic_DNA"/>
</dbReference>
<dbReference type="RefSeq" id="WP_015937360.1">
    <property type="nucleotide sequence ID" value="NC_011886.1"/>
</dbReference>
<dbReference type="SMR" id="B8HA51"/>
<dbReference type="STRING" id="452863.Achl_2175"/>
<dbReference type="KEGG" id="ach:Achl_2175"/>
<dbReference type="eggNOG" id="COG2115">
    <property type="taxonomic scope" value="Bacteria"/>
</dbReference>
<dbReference type="HOGENOM" id="CLU_060750_0_0_11"/>
<dbReference type="OrthoDB" id="9763981at2"/>
<dbReference type="Proteomes" id="UP000002505">
    <property type="component" value="Chromosome"/>
</dbReference>
<dbReference type="GO" id="GO:0005737">
    <property type="term" value="C:cytoplasm"/>
    <property type="evidence" value="ECO:0007669"/>
    <property type="project" value="UniProtKB-SubCell"/>
</dbReference>
<dbReference type="GO" id="GO:0000287">
    <property type="term" value="F:magnesium ion binding"/>
    <property type="evidence" value="ECO:0007669"/>
    <property type="project" value="UniProtKB-UniRule"/>
</dbReference>
<dbReference type="GO" id="GO:0009045">
    <property type="term" value="F:xylose isomerase activity"/>
    <property type="evidence" value="ECO:0007669"/>
    <property type="project" value="UniProtKB-UniRule"/>
</dbReference>
<dbReference type="GO" id="GO:0042732">
    <property type="term" value="P:D-xylose metabolic process"/>
    <property type="evidence" value="ECO:0007669"/>
    <property type="project" value="UniProtKB-UniRule"/>
</dbReference>
<dbReference type="Gene3D" id="3.20.20.150">
    <property type="entry name" value="Divalent-metal-dependent TIM barrel enzymes"/>
    <property type="match status" value="1"/>
</dbReference>
<dbReference type="HAMAP" id="MF_00455">
    <property type="entry name" value="Xylose_isom_A"/>
    <property type="match status" value="1"/>
</dbReference>
<dbReference type="InterPro" id="IPR036237">
    <property type="entry name" value="Xyl_isomerase-like_sf"/>
</dbReference>
<dbReference type="InterPro" id="IPR013022">
    <property type="entry name" value="Xyl_isomerase-like_TIM-brl"/>
</dbReference>
<dbReference type="InterPro" id="IPR013453">
    <property type="entry name" value="XylA_actinobac"/>
</dbReference>
<dbReference type="InterPro" id="IPR001998">
    <property type="entry name" value="Xylose_isomerase"/>
</dbReference>
<dbReference type="NCBIfam" id="TIGR02631">
    <property type="entry name" value="xylA_Arthro"/>
    <property type="match status" value="1"/>
</dbReference>
<dbReference type="PANTHER" id="PTHR48408">
    <property type="match status" value="1"/>
</dbReference>
<dbReference type="PANTHER" id="PTHR48408:SF1">
    <property type="entry name" value="XYLOSE ISOMERASE"/>
    <property type="match status" value="1"/>
</dbReference>
<dbReference type="Pfam" id="PF01261">
    <property type="entry name" value="AP_endonuc_2"/>
    <property type="match status" value="1"/>
</dbReference>
<dbReference type="PRINTS" id="PR00688">
    <property type="entry name" value="XYLOSISMRASE"/>
</dbReference>
<dbReference type="SUPFAM" id="SSF51658">
    <property type="entry name" value="Xylose isomerase-like"/>
    <property type="match status" value="1"/>
</dbReference>
<dbReference type="PROSITE" id="PS51415">
    <property type="entry name" value="XYLOSE_ISOMERASE"/>
    <property type="match status" value="1"/>
</dbReference>
<organism>
    <name type="scientific">Pseudarthrobacter chlorophenolicus (strain ATCC 700700 / DSM 12829 / CIP 107037 / JCM 12360 / KCTC 9906 / NCIMB 13794 / A6)</name>
    <name type="common">Arthrobacter chlorophenolicus</name>
    <dbReference type="NCBI Taxonomy" id="452863"/>
    <lineage>
        <taxon>Bacteria</taxon>
        <taxon>Bacillati</taxon>
        <taxon>Actinomycetota</taxon>
        <taxon>Actinomycetes</taxon>
        <taxon>Micrococcales</taxon>
        <taxon>Micrococcaceae</taxon>
        <taxon>Pseudarthrobacter</taxon>
    </lineage>
</organism>
<accession>B8HA51</accession>
<evidence type="ECO:0000255" key="1">
    <source>
        <dbReference type="HAMAP-Rule" id="MF_00455"/>
    </source>
</evidence>